<name>RECQ1_RAT</name>
<feature type="chain" id="PRO_0000205052" description="ATP-dependent DNA helicase Q1">
    <location>
        <begin position="1"/>
        <end position="621"/>
    </location>
</feature>
<feature type="domain" description="Helicase ATP-binding" evidence="2">
    <location>
        <begin position="100"/>
        <end position="275"/>
    </location>
</feature>
<feature type="domain" description="Helicase C-terminal" evidence="3">
    <location>
        <begin position="296"/>
        <end position="451"/>
    </location>
</feature>
<feature type="short sequence motif" description="DEVH box">
    <location>
        <begin position="219"/>
        <end position="222"/>
    </location>
</feature>
<feature type="binding site" evidence="2">
    <location>
        <begin position="113"/>
        <end position="120"/>
    </location>
    <ligand>
        <name>ATP</name>
        <dbReference type="ChEBI" id="CHEBI:30616"/>
    </ligand>
</feature>
<feature type="binding site" evidence="1">
    <location>
        <position position="453"/>
    </location>
    <ligand>
        <name>Zn(2+)</name>
        <dbReference type="ChEBI" id="CHEBI:29105"/>
    </ligand>
</feature>
<feature type="binding site" evidence="1">
    <location>
        <position position="471"/>
    </location>
    <ligand>
        <name>Zn(2+)</name>
        <dbReference type="ChEBI" id="CHEBI:29105"/>
    </ligand>
</feature>
<feature type="binding site" evidence="1">
    <location>
        <position position="475"/>
    </location>
    <ligand>
        <name>Zn(2+)</name>
        <dbReference type="ChEBI" id="CHEBI:29105"/>
    </ligand>
</feature>
<feature type="binding site" evidence="1">
    <location>
        <position position="478"/>
    </location>
    <ligand>
        <name>Zn(2+)</name>
        <dbReference type="ChEBI" id="CHEBI:29105"/>
    </ligand>
</feature>
<feature type="modified residue" description="N6-acetyllysine" evidence="1">
    <location>
        <position position="514"/>
    </location>
</feature>
<feature type="modified residue" description="N6-acetyllysine" evidence="1">
    <location>
        <position position="522"/>
    </location>
</feature>
<feature type="modified residue" description="Phosphoserine" evidence="1">
    <location>
        <position position="597"/>
    </location>
</feature>
<feature type="modified residue" description="Phosphoserine" evidence="5">
    <location>
        <position position="602"/>
    </location>
</feature>
<sequence>MASIPALTDELESVSSELHAVDIQIQELTERQHELLQRKSVLTKRIKQCLEDSAAEASGDCDTSPAAWSKEDFPWSGKVKHVLRDVFKLQKFRPLQLETVNATMARKDIFLVMPTGGGKSLCYQLPALCSDGFTLVICPLISLMEDQLMVLQQLGISATMLNSSSSKEHVKCVHTEMMNKNSHLKLIYVTPEKIAKSKMFMSRLEKAYEAGRLTGVAVDEVHCCSQWGHDFRPDYKALGILKRQFPNISLIGLTATATNHVLKDAQKILCVEKCLTFTASFNRPNLYYEVRQKPSSAEDFIENIANLINGRYKGKSGIIYCFSQKDSEQVTISLQKLGVRAGTYHANMEPEDRTKVHTQWSANELQVVVATVAFGMGIDKPDVRFVIHHSMSKSMENYYQESGRAGRDDWRADCILYYGFGDIFRISSMVVMENVGQQKLYEMVSYCQNISKCRRALIAQHFDEVWNADACNKMCDNCCKDDSFEKKNITEHCQALIKILKQAEGLNEKLTPLKLIDAWMGKGAAKFRVAGVAVPALPREDLEKIIVHALLQQYLKEDYSFTAYATISYLKVGPRASLLSNEGHAVTMQVKRSTQSSVRAASPEACEVDSKGKEKSSAVLC</sequence>
<organism>
    <name type="scientific">Rattus norvegicus</name>
    <name type="common">Rat</name>
    <dbReference type="NCBI Taxonomy" id="10116"/>
    <lineage>
        <taxon>Eukaryota</taxon>
        <taxon>Metazoa</taxon>
        <taxon>Chordata</taxon>
        <taxon>Craniata</taxon>
        <taxon>Vertebrata</taxon>
        <taxon>Euteleostomi</taxon>
        <taxon>Mammalia</taxon>
        <taxon>Eutheria</taxon>
        <taxon>Euarchontoglires</taxon>
        <taxon>Glires</taxon>
        <taxon>Rodentia</taxon>
        <taxon>Myomorpha</taxon>
        <taxon>Muroidea</taxon>
        <taxon>Muridae</taxon>
        <taxon>Murinae</taxon>
        <taxon>Rattus</taxon>
    </lineage>
</organism>
<keyword id="KW-0007">Acetylation</keyword>
<keyword id="KW-0067">ATP-binding</keyword>
<keyword id="KW-0238">DNA-binding</keyword>
<keyword id="KW-0347">Helicase</keyword>
<keyword id="KW-0378">Hydrolase</keyword>
<keyword id="KW-0413">Isomerase</keyword>
<keyword id="KW-0479">Metal-binding</keyword>
<keyword id="KW-0547">Nucleotide-binding</keyword>
<keyword id="KW-0539">Nucleus</keyword>
<keyword id="KW-0597">Phosphoprotein</keyword>
<keyword id="KW-1185">Reference proteome</keyword>
<keyword id="KW-0862">Zinc</keyword>
<reference key="1">
    <citation type="journal article" date="2004" name="Genome Res.">
        <title>The status, quality, and expansion of the NIH full-length cDNA project: the Mammalian Gene Collection (MGC).</title>
        <authorList>
            <consortium name="The MGC Project Team"/>
        </authorList>
    </citation>
    <scope>NUCLEOTIDE SEQUENCE [LARGE SCALE MRNA]</scope>
    <source>
        <tissue>Testis</tissue>
    </source>
</reference>
<reference key="2">
    <citation type="journal article" date="2012" name="Nat. Commun.">
        <title>Quantitative maps of protein phosphorylation sites across 14 different rat organs and tissues.</title>
        <authorList>
            <person name="Lundby A."/>
            <person name="Secher A."/>
            <person name="Lage K."/>
            <person name="Nordsborg N.B."/>
            <person name="Dmytriyev A."/>
            <person name="Lundby C."/>
            <person name="Olsen J.V."/>
        </authorList>
    </citation>
    <scope>PHOSPHORYLATION [LARGE SCALE ANALYSIS] AT SER-602</scope>
    <scope>IDENTIFICATION BY MASS SPECTROMETRY [LARGE SCALE ANALYSIS]</scope>
</reference>
<accession>Q6AYJ1</accession>
<gene>
    <name type="primary">Recql</name>
    <name type="synonym">Recql1</name>
</gene>
<dbReference type="EC" id="5.6.2.4" evidence="1"/>
<dbReference type="EMBL" id="BC079026">
    <property type="protein sequence ID" value="AAH79026.1"/>
    <property type="molecule type" value="mRNA"/>
</dbReference>
<dbReference type="RefSeq" id="NP_001012098.1">
    <property type="nucleotide sequence ID" value="NM_001012098.1"/>
</dbReference>
<dbReference type="RefSeq" id="XP_006237683.1">
    <property type="nucleotide sequence ID" value="XM_006237621.2"/>
</dbReference>
<dbReference type="RefSeq" id="XP_017448156.1">
    <property type="nucleotide sequence ID" value="XM_017592667.1"/>
</dbReference>
<dbReference type="RefSeq" id="XP_038963629.1">
    <property type="nucleotide sequence ID" value="XM_039107701.2"/>
</dbReference>
<dbReference type="RefSeq" id="XP_038963630.1">
    <property type="nucleotide sequence ID" value="XM_039107702.2"/>
</dbReference>
<dbReference type="RefSeq" id="XP_063142237.1">
    <property type="nucleotide sequence ID" value="XM_063286167.1"/>
</dbReference>
<dbReference type="RefSeq" id="XP_063142239.1">
    <property type="nucleotide sequence ID" value="XM_063286169.1"/>
</dbReference>
<dbReference type="SMR" id="Q6AYJ1"/>
<dbReference type="FunCoup" id="Q6AYJ1">
    <property type="interactions" value="3066"/>
</dbReference>
<dbReference type="STRING" id="10116.ENSRNOP00000060671"/>
<dbReference type="iPTMnet" id="Q6AYJ1"/>
<dbReference type="PhosphoSitePlus" id="Q6AYJ1"/>
<dbReference type="PaxDb" id="10116-ENSRNOP00000060671"/>
<dbReference type="Ensembl" id="ENSRNOT00000065576.3">
    <property type="protein sequence ID" value="ENSRNOP00000060671.1"/>
    <property type="gene ID" value="ENSRNOG00000012602.8"/>
</dbReference>
<dbReference type="GeneID" id="312824"/>
<dbReference type="KEGG" id="rno:312824"/>
<dbReference type="UCSC" id="RGD:1311071">
    <property type="organism name" value="rat"/>
</dbReference>
<dbReference type="AGR" id="RGD:1311071"/>
<dbReference type="CTD" id="5965"/>
<dbReference type="RGD" id="1311071">
    <property type="gene designation" value="Recql"/>
</dbReference>
<dbReference type="eggNOG" id="KOG0353">
    <property type="taxonomic scope" value="Eukaryota"/>
</dbReference>
<dbReference type="GeneTree" id="ENSGT00940000157013"/>
<dbReference type="InParanoid" id="Q6AYJ1"/>
<dbReference type="OrthoDB" id="10261556at2759"/>
<dbReference type="PRO" id="PR:Q6AYJ1"/>
<dbReference type="Proteomes" id="UP000002494">
    <property type="component" value="Chromosome 4"/>
</dbReference>
<dbReference type="Bgee" id="ENSRNOG00000012602">
    <property type="expression patterns" value="Expressed in testis and 20 other cell types or tissues"/>
</dbReference>
<dbReference type="ExpressionAtlas" id="Q6AYJ1">
    <property type="expression patterns" value="baseline and differential"/>
</dbReference>
<dbReference type="GO" id="GO:0005694">
    <property type="term" value="C:chromosome"/>
    <property type="evidence" value="ECO:0000318"/>
    <property type="project" value="GO_Central"/>
</dbReference>
<dbReference type="GO" id="GO:0005737">
    <property type="term" value="C:cytoplasm"/>
    <property type="evidence" value="ECO:0000318"/>
    <property type="project" value="GO_Central"/>
</dbReference>
<dbReference type="GO" id="GO:0005634">
    <property type="term" value="C:nucleus"/>
    <property type="evidence" value="ECO:0000250"/>
    <property type="project" value="UniProtKB"/>
</dbReference>
<dbReference type="GO" id="GO:0043138">
    <property type="term" value="F:3'-5' DNA helicase activity"/>
    <property type="evidence" value="ECO:0000250"/>
    <property type="project" value="UniProtKB"/>
</dbReference>
<dbReference type="GO" id="GO:0005524">
    <property type="term" value="F:ATP binding"/>
    <property type="evidence" value="ECO:0007669"/>
    <property type="project" value="UniProtKB-KW"/>
</dbReference>
<dbReference type="GO" id="GO:0016887">
    <property type="term" value="F:ATP hydrolysis activity"/>
    <property type="evidence" value="ECO:0007669"/>
    <property type="project" value="RHEA"/>
</dbReference>
<dbReference type="GO" id="GO:0003678">
    <property type="term" value="F:DNA helicase activity"/>
    <property type="evidence" value="ECO:0000266"/>
    <property type="project" value="RGD"/>
</dbReference>
<dbReference type="GO" id="GO:1990814">
    <property type="term" value="F:DNA/DNA annealing activity"/>
    <property type="evidence" value="ECO:0000266"/>
    <property type="project" value="RGD"/>
</dbReference>
<dbReference type="GO" id="GO:0036121">
    <property type="term" value="F:double-stranded DNA helicase activity"/>
    <property type="evidence" value="ECO:0000250"/>
    <property type="project" value="UniProtKB"/>
</dbReference>
<dbReference type="GO" id="GO:0009378">
    <property type="term" value="F:four-way junction helicase activity"/>
    <property type="evidence" value="ECO:0000318"/>
    <property type="project" value="GO_Central"/>
</dbReference>
<dbReference type="GO" id="GO:0046872">
    <property type="term" value="F:metal ion binding"/>
    <property type="evidence" value="ECO:0007669"/>
    <property type="project" value="UniProtKB-KW"/>
</dbReference>
<dbReference type="GO" id="GO:0006260">
    <property type="term" value="P:DNA replication"/>
    <property type="evidence" value="ECO:0000318"/>
    <property type="project" value="GO_Central"/>
</dbReference>
<dbReference type="GO" id="GO:0000724">
    <property type="term" value="P:double-strand break repair via homologous recombination"/>
    <property type="evidence" value="ECO:0000318"/>
    <property type="project" value="GO_Central"/>
</dbReference>
<dbReference type="GO" id="GO:0031297">
    <property type="term" value="P:replication fork processing"/>
    <property type="evidence" value="ECO:0000250"/>
    <property type="project" value="UniProtKB"/>
</dbReference>
<dbReference type="CDD" id="cd18015">
    <property type="entry name" value="DEXHc_RecQ1"/>
    <property type="match status" value="1"/>
</dbReference>
<dbReference type="CDD" id="cd18794">
    <property type="entry name" value="SF2_C_RecQ"/>
    <property type="match status" value="1"/>
</dbReference>
<dbReference type="FunFam" id="1.10.10.10:FF:000306">
    <property type="entry name" value="ATP-dependent DNA helicase"/>
    <property type="match status" value="1"/>
</dbReference>
<dbReference type="FunFam" id="3.40.50.300:FF:000596">
    <property type="entry name" value="ATP-dependent DNA helicase"/>
    <property type="match status" value="1"/>
</dbReference>
<dbReference type="FunFam" id="3.40.50.300:FF:000752">
    <property type="entry name" value="ATP-dependent DNA helicase"/>
    <property type="match status" value="1"/>
</dbReference>
<dbReference type="Gene3D" id="3.40.50.300">
    <property type="entry name" value="P-loop containing nucleotide triphosphate hydrolases"/>
    <property type="match status" value="2"/>
</dbReference>
<dbReference type="Gene3D" id="1.10.10.10">
    <property type="entry name" value="Winged helix-like DNA-binding domain superfamily/Winged helix DNA-binding domain"/>
    <property type="match status" value="1"/>
</dbReference>
<dbReference type="InterPro" id="IPR011545">
    <property type="entry name" value="DEAD/DEAH_box_helicase_dom"/>
</dbReference>
<dbReference type="InterPro" id="IPR004589">
    <property type="entry name" value="DNA_helicase_ATP-dep_RecQ"/>
</dbReference>
<dbReference type="InterPro" id="IPR014001">
    <property type="entry name" value="Helicase_ATP-bd"/>
</dbReference>
<dbReference type="InterPro" id="IPR001650">
    <property type="entry name" value="Helicase_C-like"/>
</dbReference>
<dbReference type="InterPro" id="IPR027417">
    <property type="entry name" value="P-loop_NTPase"/>
</dbReference>
<dbReference type="InterPro" id="IPR032284">
    <property type="entry name" value="RecQ_Zn-bd"/>
</dbReference>
<dbReference type="InterPro" id="IPR018982">
    <property type="entry name" value="RQC_domain"/>
</dbReference>
<dbReference type="InterPro" id="IPR036388">
    <property type="entry name" value="WH-like_DNA-bd_sf"/>
</dbReference>
<dbReference type="NCBIfam" id="TIGR00614">
    <property type="entry name" value="recQ_fam"/>
    <property type="match status" value="1"/>
</dbReference>
<dbReference type="PANTHER" id="PTHR13710:SF105">
    <property type="entry name" value="ATP-DEPENDENT DNA HELICASE Q1"/>
    <property type="match status" value="1"/>
</dbReference>
<dbReference type="PANTHER" id="PTHR13710">
    <property type="entry name" value="DNA HELICASE RECQ FAMILY MEMBER"/>
    <property type="match status" value="1"/>
</dbReference>
<dbReference type="Pfam" id="PF00270">
    <property type="entry name" value="DEAD"/>
    <property type="match status" value="1"/>
</dbReference>
<dbReference type="Pfam" id="PF00271">
    <property type="entry name" value="Helicase_C"/>
    <property type="match status" value="1"/>
</dbReference>
<dbReference type="Pfam" id="PF16124">
    <property type="entry name" value="RecQ_Zn_bind"/>
    <property type="match status" value="1"/>
</dbReference>
<dbReference type="Pfam" id="PF09382">
    <property type="entry name" value="RQC"/>
    <property type="match status" value="1"/>
</dbReference>
<dbReference type="SMART" id="SM00487">
    <property type="entry name" value="DEXDc"/>
    <property type="match status" value="1"/>
</dbReference>
<dbReference type="SMART" id="SM00490">
    <property type="entry name" value="HELICc"/>
    <property type="match status" value="1"/>
</dbReference>
<dbReference type="SUPFAM" id="SSF52540">
    <property type="entry name" value="P-loop containing nucleoside triphosphate hydrolases"/>
    <property type="match status" value="1"/>
</dbReference>
<dbReference type="PROSITE" id="PS51192">
    <property type="entry name" value="HELICASE_ATP_BIND_1"/>
    <property type="match status" value="1"/>
</dbReference>
<dbReference type="PROSITE" id="PS51194">
    <property type="entry name" value="HELICASE_CTER"/>
    <property type="match status" value="1"/>
</dbReference>
<comment type="function">
    <text evidence="1">DNA helicase that plays a role in DNA damage repair and genome stability (By similarity). Exhibits a magnesium- and ATP-dependent DNA-helicase activity that unwinds single- and double-stranded DNA in a 3'-5' direction (By similarity). Plays a role in restoring regressed replication forks (By similarity). Required to restart stalled replication forks induced by abortive topoisomerase 1 and 2 lesions (By similarity). May play a role in the repair of DNA that is damaged by ultraviolet light or other mutagens (By similarity).</text>
</comment>
<comment type="catalytic activity">
    <reaction evidence="1">
        <text>Couples ATP hydrolysis with the unwinding of duplex DNA by translocating in the 3'-5' direction.</text>
        <dbReference type="EC" id="5.6.2.4"/>
    </reaction>
</comment>
<comment type="catalytic activity">
    <reaction evidence="1">
        <text>ATP + H2O = ADP + phosphate + H(+)</text>
        <dbReference type="Rhea" id="RHEA:13065"/>
        <dbReference type="ChEBI" id="CHEBI:15377"/>
        <dbReference type="ChEBI" id="CHEBI:15378"/>
        <dbReference type="ChEBI" id="CHEBI:30616"/>
        <dbReference type="ChEBI" id="CHEBI:43474"/>
        <dbReference type="ChEBI" id="CHEBI:456216"/>
    </reaction>
    <physiologicalReaction direction="left-to-right" evidence="1">
        <dbReference type="Rhea" id="RHEA:13066"/>
    </physiologicalReaction>
</comment>
<comment type="catalytic activity">
    <reaction evidence="1">
        <text>dATP + H2O = dADP + phosphate + H(+)</text>
        <dbReference type="Rhea" id="RHEA:51908"/>
        <dbReference type="ChEBI" id="CHEBI:15377"/>
        <dbReference type="ChEBI" id="CHEBI:15378"/>
        <dbReference type="ChEBI" id="CHEBI:43474"/>
        <dbReference type="ChEBI" id="CHEBI:57667"/>
        <dbReference type="ChEBI" id="CHEBI:61404"/>
    </reaction>
    <physiologicalReaction direction="left-to-right" evidence="1">
        <dbReference type="Rhea" id="RHEA:51909"/>
    </physiologicalReaction>
</comment>
<comment type="cofactor">
    <cofactor evidence="1">
        <name>Mg(2+)</name>
        <dbReference type="ChEBI" id="CHEBI:18420"/>
    </cofactor>
    <cofactor evidence="1">
        <name>Mn(2+)</name>
        <dbReference type="ChEBI" id="CHEBI:29035"/>
    </cofactor>
</comment>
<comment type="cofactor">
    <cofactor evidence="1">
        <name>Zn(2+)</name>
        <dbReference type="ChEBI" id="CHEBI:29105"/>
    </cofactor>
    <text evidence="1">Binds 1 Zn(2+) per monomer.</text>
</comment>
<comment type="subunit">
    <text evidence="1">May form homodimers or higher order oligomers (By similarity). Interacts with EXO1. Interacts with MLH1. Interacts with PARP1 (By similarity).</text>
</comment>
<comment type="subcellular location">
    <subcellularLocation>
        <location evidence="1">Nucleus</location>
    </subcellularLocation>
</comment>
<comment type="similarity">
    <text evidence="4">Belongs to the helicase family. RecQ subfamily.</text>
</comment>
<evidence type="ECO:0000250" key="1">
    <source>
        <dbReference type="UniProtKB" id="P46063"/>
    </source>
</evidence>
<evidence type="ECO:0000255" key="2">
    <source>
        <dbReference type="PROSITE-ProRule" id="PRU00541"/>
    </source>
</evidence>
<evidence type="ECO:0000255" key="3">
    <source>
        <dbReference type="PROSITE-ProRule" id="PRU00542"/>
    </source>
</evidence>
<evidence type="ECO:0000305" key="4"/>
<evidence type="ECO:0007744" key="5">
    <source>
    </source>
</evidence>
<proteinExistence type="evidence at protein level"/>
<protein>
    <recommendedName>
        <fullName evidence="1">ATP-dependent DNA helicase Q1</fullName>
        <ecNumber evidence="1">5.6.2.4</ecNumber>
    </recommendedName>
    <alternativeName>
        <fullName evidence="4">DNA 3'-5' helicase Q1</fullName>
    </alternativeName>
    <alternativeName>
        <fullName>DNA-dependent ATPase Q1</fullName>
    </alternativeName>
    <alternativeName>
        <fullName>RecQ protein-like 1</fullName>
    </alternativeName>
</protein>